<protein>
    <recommendedName>
        <fullName evidence="1">2-succinyl-5-enolpyruvyl-6-hydroxy-3-cyclohexene-1-carboxylate synthase</fullName>
        <shortName evidence="1">SEPHCHC synthase</shortName>
        <ecNumber evidence="1">2.2.1.9</ecNumber>
    </recommendedName>
    <alternativeName>
        <fullName evidence="1">Menaquinone biosynthesis protein MenD</fullName>
    </alternativeName>
</protein>
<proteinExistence type="inferred from homology"/>
<keyword id="KW-0460">Magnesium</keyword>
<keyword id="KW-0464">Manganese</keyword>
<keyword id="KW-0474">Menaquinone biosynthesis</keyword>
<keyword id="KW-0479">Metal-binding</keyword>
<keyword id="KW-0786">Thiamine pyrophosphate</keyword>
<keyword id="KW-0808">Transferase</keyword>
<name>MEND_BACCN</name>
<comment type="function">
    <text evidence="1">Catalyzes the thiamine diphosphate-dependent decarboxylation of 2-oxoglutarate and the subsequent addition of the resulting succinic semialdehyde-thiamine pyrophosphate anion to isochorismate to yield 2-succinyl-5-enolpyruvyl-6-hydroxy-3-cyclohexene-1-carboxylate (SEPHCHC).</text>
</comment>
<comment type="catalytic activity">
    <reaction evidence="1">
        <text>isochorismate + 2-oxoglutarate + H(+) = 5-enolpyruvoyl-6-hydroxy-2-succinyl-cyclohex-3-ene-1-carboxylate + CO2</text>
        <dbReference type="Rhea" id="RHEA:25593"/>
        <dbReference type="ChEBI" id="CHEBI:15378"/>
        <dbReference type="ChEBI" id="CHEBI:16526"/>
        <dbReference type="ChEBI" id="CHEBI:16810"/>
        <dbReference type="ChEBI" id="CHEBI:29780"/>
        <dbReference type="ChEBI" id="CHEBI:58818"/>
        <dbReference type="EC" id="2.2.1.9"/>
    </reaction>
</comment>
<comment type="cofactor">
    <cofactor evidence="1">
        <name>Mg(2+)</name>
        <dbReference type="ChEBI" id="CHEBI:18420"/>
    </cofactor>
    <cofactor evidence="1">
        <name>Mn(2+)</name>
        <dbReference type="ChEBI" id="CHEBI:29035"/>
    </cofactor>
</comment>
<comment type="cofactor">
    <cofactor evidence="1">
        <name>thiamine diphosphate</name>
        <dbReference type="ChEBI" id="CHEBI:58937"/>
    </cofactor>
    <text evidence="1">Binds 1 thiamine pyrophosphate per subunit.</text>
</comment>
<comment type="pathway">
    <text evidence="1">Quinol/quinone metabolism; 1,4-dihydroxy-2-naphthoate biosynthesis; 1,4-dihydroxy-2-naphthoate from chorismate: step 2/7.</text>
</comment>
<comment type="pathway">
    <text evidence="1">Quinol/quinone metabolism; menaquinone biosynthesis.</text>
</comment>
<comment type="subunit">
    <text evidence="1">Homodimer.</text>
</comment>
<comment type="similarity">
    <text evidence="1">Belongs to the TPP enzyme family. MenD subfamily.</text>
</comment>
<accession>A7GU91</accession>
<feature type="chain" id="PRO_0000341708" description="2-succinyl-5-enolpyruvyl-6-hydroxy-3-cyclohexene-1-carboxylate synthase">
    <location>
        <begin position="1"/>
        <end position="584"/>
    </location>
</feature>
<gene>
    <name evidence="1" type="primary">menD</name>
    <name type="ordered locus">Bcer98_3493</name>
</gene>
<reference key="1">
    <citation type="journal article" date="2008" name="Chem. Biol. Interact.">
        <title>Extending the Bacillus cereus group genomics to putative food-borne pathogens of different toxicity.</title>
        <authorList>
            <person name="Lapidus A."/>
            <person name="Goltsman E."/>
            <person name="Auger S."/>
            <person name="Galleron N."/>
            <person name="Segurens B."/>
            <person name="Dossat C."/>
            <person name="Land M.L."/>
            <person name="Broussolle V."/>
            <person name="Brillard J."/>
            <person name="Guinebretiere M.-H."/>
            <person name="Sanchis V."/>
            <person name="Nguen-the C."/>
            <person name="Lereclus D."/>
            <person name="Richardson P."/>
            <person name="Wincker P."/>
            <person name="Weissenbach J."/>
            <person name="Ehrlich S.D."/>
            <person name="Sorokin A."/>
        </authorList>
    </citation>
    <scope>NUCLEOTIDE SEQUENCE [LARGE SCALE GENOMIC DNA]</scope>
    <source>
        <strain>DSM 22905 / CIP 110041 / 391-98 / NVH 391-98</strain>
    </source>
</reference>
<dbReference type="EC" id="2.2.1.9" evidence="1"/>
<dbReference type="EMBL" id="CP000764">
    <property type="protein sequence ID" value="ABS23699.1"/>
    <property type="molecule type" value="Genomic_DNA"/>
</dbReference>
<dbReference type="RefSeq" id="WP_012095947.1">
    <property type="nucleotide sequence ID" value="NC_009674.1"/>
</dbReference>
<dbReference type="SMR" id="A7GU91"/>
<dbReference type="STRING" id="315749.Bcer98_3493"/>
<dbReference type="GeneID" id="33898724"/>
<dbReference type="KEGG" id="bcy:Bcer98_3493"/>
<dbReference type="eggNOG" id="COG1165">
    <property type="taxonomic scope" value="Bacteria"/>
</dbReference>
<dbReference type="HOGENOM" id="CLU_006051_3_0_9"/>
<dbReference type="OrthoDB" id="9791859at2"/>
<dbReference type="UniPathway" id="UPA00079"/>
<dbReference type="UniPathway" id="UPA01057">
    <property type="reaction ID" value="UER00164"/>
</dbReference>
<dbReference type="Proteomes" id="UP000002300">
    <property type="component" value="Chromosome"/>
</dbReference>
<dbReference type="GO" id="GO:0070204">
    <property type="term" value="F:2-succinyl-5-enolpyruvyl-6-hydroxy-3-cyclohexene-1-carboxylic-acid synthase activity"/>
    <property type="evidence" value="ECO:0007669"/>
    <property type="project" value="UniProtKB-UniRule"/>
</dbReference>
<dbReference type="GO" id="GO:0000287">
    <property type="term" value="F:magnesium ion binding"/>
    <property type="evidence" value="ECO:0007669"/>
    <property type="project" value="UniProtKB-UniRule"/>
</dbReference>
<dbReference type="GO" id="GO:0030145">
    <property type="term" value="F:manganese ion binding"/>
    <property type="evidence" value="ECO:0007669"/>
    <property type="project" value="UniProtKB-UniRule"/>
</dbReference>
<dbReference type="GO" id="GO:0030976">
    <property type="term" value="F:thiamine pyrophosphate binding"/>
    <property type="evidence" value="ECO:0007669"/>
    <property type="project" value="UniProtKB-UniRule"/>
</dbReference>
<dbReference type="GO" id="GO:0009234">
    <property type="term" value="P:menaquinone biosynthetic process"/>
    <property type="evidence" value="ECO:0007669"/>
    <property type="project" value="UniProtKB-UniRule"/>
</dbReference>
<dbReference type="CDD" id="cd07037">
    <property type="entry name" value="TPP_PYR_MenD"/>
    <property type="match status" value="1"/>
</dbReference>
<dbReference type="CDD" id="cd02009">
    <property type="entry name" value="TPP_SHCHC_synthase"/>
    <property type="match status" value="1"/>
</dbReference>
<dbReference type="Gene3D" id="3.40.50.970">
    <property type="match status" value="2"/>
</dbReference>
<dbReference type="Gene3D" id="3.40.50.1220">
    <property type="entry name" value="TPP-binding domain"/>
    <property type="match status" value="1"/>
</dbReference>
<dbReference type="HAMAP" id="MF_01659">
    <property type="entry name" value="MenD"/>
    <property type="match status" value="1"/>
</dbReference>
<dbReference type="InterPro" id="IPR029035">
    <property type="entry name" value="DHS-like_NAD/FAD-binding_dom"/>
</dbReference>
<dbReference type="InterPro" id="IPR004433">
    <property type="entry name" value="MenaQ_synth_MenD"/>
</dbReference>
<dbReference type="InterPro" id="IPR032264">
    <property type="entry name" value="MenD_middle"/>
</dbReference>
<dbReference type="InterPro" id="IPR029061">
    <property type="entry name" value="THDP-binding"/>
</dbReference>
<dbReference type="InterPro" id="IPR012001">
    <property type="entry name" value="Thiamin_PyroP_enz_TPP-bd_dom"/>
</dbReference>
<dbReference type="InterPro" id="IPR011766">
    <property type="entry name" value="TPP_enzyme_TPP-bd"/>
</dbReference>
<dbReference type="NCBIfam" id="TIGR00173">
    <property type="entry name" value="menD"/>
    <property type="match status" value="1"/>
</dbReference>
<dbReference type="PANTHER" id="PTHR42916">
    <property type="entry name" value="2-SUCCINYL-5-ENOLPYRUVYL-6-HYDROXY-3-CYCLOHEXENE-1-CARBOXYLATE SYNTHASE"/>
    <property type="match status" value="1"/>
</dbReference>
<dbReference type="PANTHER" id="PTHR42916:SF1">
    <property type="entry name" value="PROTEIN PHYLLO, CHLOROPLASTIC"/>
    <property type="match status" value="1"/>
</dbReference>
<dbReference type="Pfam" id="PF02775">
    <property type="entry name" value="TPP_enzyme_C"/>
    <property type="match status" value="1"/>
</dbReference>
<dbReference type="Pfam" id="PF16582">
    <property type="entry name" value="TPP_enzyme_M_2"/>
    <property type="match status" value="1"/>
</dbReference>
<dbReference type="Pfam" id="PF02776">
    <property type="entry name" value="TPP_enzyme_N"/>
    <property type="match status" value="1"/>
</dbReference>
<dbReference type="PIRSF" id="PIRSF004983">
    <property type="entry name" value="MenD"/>
    <property type="match status" value="1"/>
</dbReference>
<dbReference type="SUPFAM" id="SSF52467">
    <property type="entry name" value="DHS-like NAD/FAD-binding domain"/>
    <property type="match status" value="1"/>
</dbReference>
<dbReference type="SUPFAM" id="SSF52518">
    <property type="entry name" value="Thiamin diphosphate-binding fold (THDP-binding)"/>
    <property type="match status" value="2"/>
</dbReference>
<evidence type="ECO:0000255" key="1">
    <source>
        <dbReference type="HAMAP-Rule" id="MF_01659"/>
    </source>
</evidence>
<organism>
    <name type="scientific">Bacillus cytotoxicus (strain DSM 22905 / CIP 110041 / 391-98 / NVH 391-98)</name>
    <dbReference type="NCBI Taxonomy" id="315749"/>
    <lineage>
        <taxon>Bacteria</taxon>
        <taxon>Bacillati</taxon>
        <taxon>Bacillota</taxon>
        <taxon>Bacilli</taxon>
        <taxon>Bacillales</taxon>
        <taxon>Bacillaceae</taxon>
        <taxon>Bacillus</taxon>
        <taxon>Bacillus cereus group</taxon>
    </lineage>
</organism>
<sequence>MNNHIEALSYYLGAFVDELARLNVCDVVISPGSRSTPLALLMEQHEQIKTYLHVDERSAAFFALGMAKAKKQPVAILCTSGTAAANYYPAVCEAYHARVPLLVLTADRPHELRDVGAPQAMNQFNLYGSFVKQFMEMALPEAREPMYQYVRMAAGRAVASASFAPMGPVHMNFPLREPLIPDFSLDGLWEQGCGEYTNRVQQGSMTLTSEYIRSLIKRLSRLEKGLIVCGDDSHLELVEVIAEFAEKTGYPVLADPLSNLRTGSHNQTMIIDCYDTFLRNELLKDTWKPDIIIRFGGMPVSKALTQYIKKQESAVHIIVDESGKWRDPALMTTEVVSASDVAFCKAMTEHMQKREQNDWFKKWKHINDKTKETLREVEAYDTAFEGKVITDIVRILPEGATLFVSNSMPIRDADTFLFTNEKKIHVMANRGVNGIDGIISTALGASTVCEPLVLVIGDLSFYHDLNGLLAAKLHDLNITIVVVNNDGGGIFSFLPQYESKEHFESLFGTPLGLDYEHVVKMYGGSFVRVSGWEAFREEVQKGIIERGLHVVEICTNREENVQLHRKLWAKSVIEIKDMLQGDTE</sequence>